<protein>
    <recommendedName>
        <fullName evidence="2">D-alanine--D-alanine ligase</fullName>
        <ecNumber evidence="2">6.3.2.4</ecNumber>
    </recommendedName>
    <alternativeName>
        <fullName evidence="2">D-Ala-D-Ala ligase</fullName>
    </alternativeName>
    <alternativeName>
        <fullName evidence="2">D-alanylalanine synthetase</fullName>
    </alternativeName>
</protein>
<proteinExistence type="inferred from homology"/>
<dbReference type="EC" id="6.3.2.4" evidence="2"/>
<dbReference type="EMBL" id="CP000936">
    <property type="protein sequence ID" value="ACA35811.1"/>
    <property type="molecule type" value="Genomic_DNA"/>
</dbReference>
<dbReference type="RefSeq" id="WP_000814683.1">
    <property type="nucleotide sequence ID" value="NC_010380.1"/>
</dbReference>
<dbReference type="SMR" id="B1I733"/>
<dbReference type="KEGG" id="spv:SPH_1779"/>
<dbReference type="HOGENOM" id="CLU_039268_0_0_9"/>
<dbReference type="UniPathway" id="UPA00219"/>
<dbReference type="Proteomes" id="UP000002163">
    <property type="component" value="Chromosome"/>
</dbReference>
<dbReference type="GO" id="GO:0005829">
    <property type="term" value="C:cytosol"/>
    <property type="evidence" value="ECO:0007669"/>
    <property type="project" value="TreeGrafter"/>
</dbReference>
<dbReference type="GO" id="GO:0005524">
    <property type="term" value="F:ATP binding"/>
    <property type="evidence" value="ECO:0007669"/>
    <property type="project" value="UniProtKB-KW"/>
</dbReference>
<dbReference type="GO" id="GO:0008716">
    <property type="term" value="F:D-alanine-D-alanine ligase activity"/>
    <property type="evidence" value="ECO:0007669"/>
    <property type="project" value="UniProtKB-UniRule"/>
</dbReference>
<dbReference type="GO" id="GO:0046872">
    <property type="term" value="F:metal ion binding"/>
    <property type="evidence" value="ECO:0007669"/>
    <property type="project" value="UniProtKB-KW"/>
</dbReference>
<dbReference type="GO" id="GO:0071555">
    <property type="term" value="P:cell wall organization"/>
    <property type="evidence" value="ECO:0007669"/>
    <property type="project" value="UniProtKB-KW"/>
</dbReference>
<dbReference type="GO" id="GO:0009252">
    <property type="term" value="P:peptidoglycan biosynthetic process"/>
    <property type="evidence" value="ECO:0007669"/>
    <property type="project" value="UniProtKB-UniRule"/>
</dbReference>
<dbReference type="GO" id="GO:0008360">
    <property type="term" value="P:regulation of cell shape"/>
    <property type="evidence" value="ECO:0007669"/>
    <property type="project" value="UniProtKB-KW"/>
</dbReference>
<dbReference type="FunFam" id="3.30.1490.20:FF:000007">
    <property type="entry name" value="D-alanine--D-alanine ligase"/>
    <property type="match status" value="1"/>
</dbReference>
<dbReference type="FunFam" id="3.30.470.20:FF:000008">
    <property type="entry name" value="D-alanine--D-alanine ligase"/>
    <property type="match status" value="1"/>
</dbReference>
<dbReference type="FunFam" id="3.40.50.20:FF:000029">
    <property type="entry name" value="D-alanine--D-alanine ligase"/>
    <property type="match status" value="1"/>
</dbReference>
<dbReference type="Gene3D" id="3.40.50.20">
    <property type="match status" value="1"/>
</dbReference>
<dbReference type="Gene3D" id="3.30.1490.20">
    <property type="entry name" value="ATP-grasp fold, A domain"/>
    <property type="match status" value="1"/>
</dbReference>
<dbReference type="Gene3D" id="3.30.470.20">
    <property type="entry name" value="ATP-grasp fold, B domain"/>
    <property type="match status" value="1"/>
</dbReference>
<dbReference type="HAMAP" id="MF_00047">
    <property type="entry name" value="Dala_Dala_lig"/>
    <property type="match status" value="1"/>
</dbReference>
<dbReference type="InterPro" id="IPR011761">
    <property type="entry name" value="ATP-grasp"/>
</dbReference>
<dbReference type="InterPro" id="IPR013815">
    <property type="entry name" value="ATP_grasp_subdomain_1"/>
</dbReference>
<dbReference type="InterPro" id="IPR000291">
    <property type="entry name" value="D-Ala_lig_Van_CS"/>
</dbReference>
<dbReference type="InterPro" id="IPR005905">
    <property type="entry name" value="D_ala_D_ala"/>
</dbReference>
<dbReference type="InterPro" id="IPR011095">
    <property type="entry name" value="Dala_Dala_lig_C"/>
</dbReference>
<dbReference type="InterPro" id="IPR011127">
    <property type="entry name" value="Dala_Dala_lig_N"/>
</dbReference>
<dbReference type="InterPro" id="IPR016185">
    <property type="entry name" value="PreATP-grasp_dom_sf"/>
</dbReference>
<dbReference type="NCBIfam" id="TIGR01205">
    <property type="entry name" value="D_ala_D_alaTIGR"/>
    <property type="match status" value="1"/>
</dbReference>
<dbReference type="NCBIfam" id="NF002528">
    <property type="entry name" value="PRK01966.1-4"/>
    <property type="match status" value="1"/>
</dbReference>
<dbReference type="NCBIfam" id="NF002529">
    <property type="entry name" value="PRK01966.1-5"/>
    <property type="match status" value="1"/>
</dbReference>
<dbReference type="PANTHER" id="PTHR23132">
    <property type="entry name" value="D-ALANINE--D-ALANINE LIGASE"/>
    <property type="match status" value="1"/>
</dbReference>
<dbReference type="PANTHER" id="PTHR23132:SF25">
    <property type="entry name" value="D-ALANINE--D-ALANINE LIGASE A"/>
    <property type="match status" value="1"/>
</dbReference>
<dbReference type="Pfam" id="PF07478">
    <property type="entry name" value="Dala_Dala_lig_C"/>
    <property type="match status" value="1"/>
</dbReference>
<dbReference type="Pfam" id="PF01820">
    <property type="entry name" value="Dala_Dala_lig_N"/>
    <property type="match status" value="1"/>
</dbReference>
<dbReference type="PIRSF" id="PIRSF039102">
    <property type="entry name" value="Ddl/VanB"/>
    <property type="match status" value="1"/>
</dbReference>
<dbReference type="SUPFAM" id="SSF56059">
    <property type="entry name" value="Glutathione synthetase ATP-binding domain-like"/>
    <property type="match status" value="1"/>
</dbReference>
<dbReference type="SUPFAM" id="SSF52440">
    <property type="entry name" value="PreATP-grasp domain"/>
    <property type="match status" value="1"/>
</dbReference>
<dbReference type="PROSITE" id="PS50975">
    <property type="entry name" value="ATP_GRASP"/>
    <property type="match status" value="1"/>
</dbReference>
<dbReference type="PROSITE" id="PS00843">
    <property type="entry name" value="DALA_DALA_LIGASE_1"/>
    <property type="match status" value="1"/>
</dbReference>
<dbReference type="PROSITE" id="PS00844">
    <property type="entry name" value="DALA_DALA_LIGASE_2"/>
    <property type="match status" value="1"/>
</dbReference>
<accession>B1I733</accession>
<gene>
    <name evidence="2" type="primary">ddl</name>
    <name type="ordered locus">SPH_1779</name>
</gene>
<reference key="1">
    <citation type="journal article" date="2010" name="Genome Biol.">
        <title>Structure and dynamics of the pan-genome of Streptococcus pneumoniae and closely related species.</title>
        <authorList>
            <person name="Donati C."/>
            <person name="Hiller N.L."/>
            <person name="Tettelin H."/>
            <person name="Muzzi A."/>
            <person name="Croucher N.J."/>
            <person name="Angiuoli S.V."/>
            <person name="Oggioni M."/>
            <person name="Dunning Hotopp J.C."/>
            <person name="Hu F.Z."/>
            <person name="Riley D.R."/>
            <person name="Covacci A."/>
            <person name="Mitchell T.J."/>
            <person name="Bentley S.D."/>
            <person name="Kilian M."/>
            <person name="Ehrlich G.D."/>
            <person name="Rappuoli R."/>
            <person name="Moxon E.R."/>
            <person name="Masignani V."/>
        </authorList>
    </citation>
    <scope>NUCLEOTIDE SEQUENCE [LARGE SCALE GENOMIC DNA]</scope>
    <source>
        <strain>Hungary19A-6</strain>
    </source>
</reference>
<feature type="chain" id="PRO_1000091210" description="D-alanine--D-alanine ligase">
    <location>
        <begin position="1"/>
        <end position="347"/>
    </location>
</feature>
<feature type="domain" description="ATP-grasp" evidence="2">
    <location>
        <begin position="131"/>
        <end position="333"/>
    </location>
</feature>
<feature type="binding site" evidence="2">
    <location>
        <begin position="161"/>
        <end position="216"/>
    </location>
    <ligand>
        <name>ATP</name>
        <dbReference type="ChEBI" id="CHEBI:30616"/>
    </ligand>
</feature>
<feature type="binding site" evidence="2">
    <location>
        <position position="287"/>
    </location>
    <ligand>
        <name>Mg(2+)</name>
        <dbReference type="ChEBI" id="CHEBI:18420"/>
        <label>1</label>
    </ligand>
</feature>
<feature type="binding site" evidence="2">
    <location>
        <position position="300"/>
    </location>
    <ligand>
        <name>Mg(2+)</name>
        <dbReference type="ChEBI" id="CHEBI:18420"/>
        <label>1</label>
    </ligand>
</feature>
<feature type="binding site" evidence="2">
    <location>
        <position position="300"/>
    </location>
    <ligand>
        <name>Mg(2+)</name>
        <dbReference type="ChEBI" id="CHEBI:18420"/>
        <label>2</label>
    </ligand>
</feature>
<feature type="binding site" evidence="2">
    <location>
        <position position="302"/>
    </location>
    <ligand>
        <name>Mg(2+)</name>
        <dbReference type="ChEBI" id="CHEBI:18420"/>
        <label>2</label>
    </ligand>
</feature>
<evidence type="ECO:0000250" key="1"/>
<evidence type="ECO:0000255" key="2">
    <source>
        <dbReference type="HAMAP-Rule" id="MF_00047"/>
    </source>
</evidence>
<name>DDL_STRPI</name>
<organism>
    <name type="scientific">Streptococcus pneumoniae (strain Hungary19A-6)</name>
    <dbReference type="NCBI Taxonomy" id="487214"/>
    <lineage>
        <taxon>Bacteria</taxon>
        <taxon>Bacillati</taxon>
        <taxon>Bacillota</taxon>
        <taxon>Bacilli</taxon>
        <taxon>Lactobacillales</taxon>
        <taxon>Streptococcaceae</taxon>
        <taxon>Streptococcus</taxon>
    </lineage>
</organism>
<keyword id="KW-0067">ATP-binding</keyword>
<keyword id="KW-0133">Cell shape</keyword>
<keyword id="KW-0961">Cell wall biogenesis/degradation</keyword>
<keyword id="KW-0963">Cytoplasm</keyword>
<keyword id="KW-0436">Ligase</keyword>
<keyword id="KW-0460">Magnesium</keyword>
<keyword id="KW-0464">Manganese</keyword>
<keyword id="KW-0479">Metal-binding</keyword>
<keyword id="KW-0547">Nucleotide-binding</keyword>
<keyword id="KW-0573">Peptidoglycan synthesis</keyword>
<sequence length="347" mass="38854">MKQTIILLYGGRSAEREVSVLSAESVMRAVNYDRFTVKTFFISQSGDFIKTQEFSQTPGQEDRLMTNETIDWDKKVAPSAIYEERAVVFPVLHGPMGEDGSVQGFLEVLKMPYVGCNILSSSLAMDKITTKRVLESAGIAQVPYVAIVEGDDVTAKIAEVEEELTYPVFTKPSNMGSSVGISKSENQEELRQALKLAFQYDSRVLVEQGVNAREIEVGLLGNYDVKSTLPGEVVKDVAFYDYDAKYIDNKITMDIPAKISDDVVAVMRQNAETAFRAIGGLGLSRCDFFYTDKGEIFLNELNTMPGFTQWSMYPLLWDNMGITYPDLIERLVELAKESFDKREAHLL</sequence>
<comment type="function">
    <text evidence="2">Cell wall formation.</text>
</comment>
<comment type="catalytic activity">
    <reaction evidence="2">
        <text>2 D-alanine + ATP = D-alanyl-D-alanine + ADP + phosphate + H(+)</text>
        <dbReference type="Rhea" id="RHEA:11224"/>
        <dbReference type="ChEBI" id="CHEBI:15378"/>
        <dbReference type="ChEBI" id="CHEBI:30616"/>
        <dbReference type="ChEBI" id="CHEBI:43474"/>
        <dbReference type="ChEBI" id="CHEBI:57416"/>
        <dbReference type="ChEBI" id="CHEBI:57822"/>
        <dbReference type="ChEBI" id="CHEBI:456216"/>
        <dbReference type="EC" id="6.3.2.4"/>
    </reaction>
</comment>
<comment type="cofactor">
    <cofactor evidence="1">
        <name>Mg(2+)</name>
        <dbReference type="ChEBI" id="CHEBI:18420"/>
    </cofactor>
    <cofactor evidence="1">
        <name>Mn(2+)</name>
        <dbReference type="ChEBI" id="CHEBI:29035"/>
    </cofactor>
    <text evidence="1">Binds 2 magnesium or manganese ions per subunit.</text>
</comment>
<comment type="pathway">
    <text evidence="2">Cell wall biogenesis; peptidoglycan biosynthesis.</text>
</comment>
<comment type="subcellular location">
    <subcellularLocation>
        <location evidence="2">Cytoplasm</location>
    </subcellularLocation>
</comment>
<comment type="similarity">
    <text evidence="2">Belongs to the D-alanine--D-alanine ligase family.</text>
</comment>